<keyword id="KW-0025">Alternative splicing</keyword>
<keyword id="KW-1015">Disulfide bond</keyword>
<keyword id="KW-0325">Glycoprotein</keyword>
<keyword id="KW-1032">Host cell membrane</keyword>
<keyword id="KW-1043">Host membrane</keyword>
<keyword id="KW-0945">Host-virus interaction</keyword>
<keyword id="KW-0375">Hydrogen ion transport</keyword>
<keyword id="KW-1083">Inhibition of host autophagy by virus</keyword>
<keyword id="KW-0407">Ion channel</keyword>
<keyword id="KW-0406">Ion transport</keyword>
<keyword id="KW-0449">Lipoprotein</keyword>
<keyword id="KW-0472">Membrane</keyword>
<keyword id="KW-0564">Palmitate</keyword>
<keyword id="KW-0597">Phosphoprotein</keyword>
<keyword id="KW-0735">Signal-anchor</keyword>
<keyword id="KW-0812">Transmembrane</keyword>
<keyword id="KW-1133">Transmembrane helix</keyword>
<keyword id="KW-0813">Transport</keyword>
<keyword id="KW-1182">Viral ion channel</keyword>
<keyword id="KW-0946">Virion</keyword>
<comment type="function">
    <text evidence="1">Forms a proton-selective ion channel that is necessary for the efficient release of the viral genome during virus entry. After attaching to the cell surface, the virion enters the cell by endocytosis. Acidification of the endosome triggers M2 ion channel activity. The influx of protons into virion interior is believed to disrupt interactions between the viral ribonucleoprotein (RNP), matrix protein 1 (M1), and lipid bilayers, thereby freeing the viral genome from interaction with viral proteins and enabling RNA segments to migrate to the host cell nucleus, where influenza virus RNA transcription and replication occur. Also plays a role in viral proteins secretory pathway. Elevates the intravesicular pH of normally acidic compartments, such as trans-Golgi network, preventing newly formed hemagglutinin from premature switching to the fusion-active conformation.</text>
</comment>
<comment type="activity regulation">
    <text>The M2 protein from most influenza A strains is inhibited by amantadine and rimantadine, resulting in viral uncoating incapacity. Emergence of amantadine-resistant variants is usually rapid.</text>
</comment>
<comment type="subunit">
    <text evidence="1">Homotetramer; composed of two disulfide-linked dimers held together by non-covalent interactions. May interact with matrix protein 1.</text>
</comment>
<comment type="subcellular location">
    <subcellularLocation>
        <location evidence="1">Virion membrane</location>
    </subcellularLocation>
    <subcellularLocation>
        <location evidence="1">Host apical cell membrane</location>
        <topology evidence="1">Single-pass type III membrane protein</topology>
    </subcellularLocation>
    <text evidence="1">Abundantly expressed at the apical plasma membrane in infected polarized epithelial cells, in close proximity to budding and assembled virions. Minor component of virions (only 16-20 molecules/virion).</text>
</comment>
<comment type="alternative products">
    <event type="alternative splicing"/>
    <isoform>
        <id>Q8BAC4-1</id>
        <name>M2</name>
        <sequence type="displayed"/>
    </isoform>
    <isoform>
        <id>Q8BAC3-1</id>
        <name>M1</name>
        <sequence type="external"/>
    </isoform>
    <text>Only the first 9 residues are shared by the 2 isoforms.</text>
</comment>
<comment type="domain">
    <text evidence="1">Cytoplasmic tail plays an important role in virion assembly and morphogenesis.</text>
</comment>
<comment type="miscellaneous">
    <text evidence="1">When the channel is activated, one or more imidazole moieties of His-37 probably become bi-protonated.</text>
</comment>
<comment type="miscellaneous">
    <text>South Carolina isolate has been sequenced from formalid fixed-lung tissues of a 21-year-old male which died in 1918 at Ft. Jackson, SC. Brevig Mission isolate has been sequenced from lung tissues of an Inuit woman buried in the permafrost in a gravesite near Brevig Mission, Alaska. This sample was recovered by John Hultin, retired pathologist.</text>
</comment>
<comment type="similarity">
    <text evidence="1">Belongs to the influenza viruses matrix protein M2 family.</text>
</comment>
<feature type="chain" id="PRO_0000310566" description="Matrix protein 2">
    <location>
        <begin position="1"/>
        <end position="97"/>
    </location>
</feature>
<feature type="topological domain" description="Virion surface" evidence="1">
    <location>
        <begin position="1"/>
        <end position="22"/>
    </location>
</feature>
<feature type="transmembrane region" description="Helical; Signal-anchor for type III membrane protein" evidence="1">
    <location>
        <begin position="23"/>
        <end position="43"/>
    </location>
</feature>
<feature type="topological domain" description="Intravirion" evidence="1">
    <location>
        <begin position="44"/>
        <end position="97"/>
    </location>
</feature>
<feature type="region of interest" description="Disordered" evidence="2">
    <location>
        <begin position="60"/>
        <end position="83"/>
    </location>
</feature>
<feature type="compositionally biased region" description="Basic and acidic residues" evidence="2">
    <location>
        <begin position="71"/>
        <end position="80"/>
    </location>
</feature>
<feature type="site" description="Essential for channel activity, possibly by being protonated during channel activation, and by forming the channel gate and the selective filter" evidence="1">
    <location>
        <position position="37"/>
    </location>
</feature>
<feature type="site" description="Seems to be involved in pH gating" evidence="1">
    <location>
        <position position="41"/>
    </location>
</feature>
<feature type="modified residue" description="Phosphoserine; by host" evidence="1">
    <location>
        <position position="64"/>
    </location>
</feature>
<feature type="modified residue" description="Phosphoserine; by host" evidence="1">
    <location>
        <position position="82"/>
    </location>
</feature>
<feature type="lipid moiety-binding region" description="S-palmitoyl cysteine; by host" evidence="1">
    <location>
        <position position="50"/>
    </location>
</feature>
<feature type="glycosylation site" description="N-linked (GlcNAc...) asparagine; by host" evidence="1">
    <location>
        <position position="20"/>
    </location>
</feature>
<feature type="disulfide bond" description="Interchain (with C-17)" evidence="1">
    <location>
        <position position="17"/>
    </location>
</feature>
<feature type="disulfide bond" description="Interchain (with C-19)" evidence="1">
    <location>
        <position position="19"/>
    </location>
</feature>
<feature type="sequence conflict" description="In Ref. 2; AAC57067." ref="2">
    <original>RGP</original>
    <variation>EGL</variation>
    <location>
        <begin position="61"/>
        <end position="63"/>
    </location>
</feature>
<organism>
    <name type="scientific">Influenza A virus (strain A/Brevig Mission/1/1918 H1N1)</name>
    <name type="common">Influenza A virus (strain A/South Carolina/1/1918 H1N1)</name>
    <dbReference type="NCBI Taxonomy" id="88776"/>
    <lineage>
        <taxon>Viruses</taxon>
        <taxon>Riboviria</taxon>
        <taxon>Orthornavirae</taxon>
        <taxon>Negarnaviricota</taxon>
        <taxon>Polyploviricotina</taxon>
        <taxon>Insthoviricetes</taxon>
        <taxon>Articulavirales</taxon>
        <taxon>Orthomyxoviridae</taxon>
        <taxon>Alphainfluenzavirus</taxon>
        <taxon>Alphainfluenzavirus influenzae</taxon>
        <taxon>Influenza A virus</taxon>
    </lineage>
</organism>
<protein>
    <recommendedName>
        <fullName evidence="1">Matrix protein 2</fullName>
    </recommendedName>
    <alternativeName>
        <fullName evidence="1">Proton channel protein M2</fullName>
    </alternativeName>
</protein>
<proteinExistence type="inferred from homology"/>
<evidence type="ECO:0000255" key="1">
    <source>
        <dbReference type="HAMAP-Rule" id="MF_04069"/>
    </source>
</evidence>
<evidence type="ECO:0000256" key="2">
    <source>
        <dbReference type="SAM" id="MobiDB-lite"/>
    </source>
</evidence>
<organismHost>
    <name type="scientific">Aves</name>
    <dbReference type="NCBI Taxonomy" id="8782"/>
</organismHost>
<organismHost>
    <name type="scientific">Homo sapiens</name>
    <name type="common">Human</name>
    <dbReference type="NCBI Taxonomy" id="9606"/>
</organismHost>
<organismHost>
    <name type="scientific">Sus scrofa</name>
    <name type="common">Pig</name>
    <dbReference type="NCBI Taxonomy" id="9823"/>
</organismHost>
<sequence length="97" mass="11213">MSLLTEVETPTRNEWGCRCNDSSDPLVIAASIIGILHLILWILDRLFFKCIYRRLKYGLKRGPSTEGVPESMREEYRKEQQSAVDVDDGHFVNIELE</sequence>
<gene>
    <name evidence="1" type="primary">M</name>
</gene>
<name>M2_I18A0</name>
<reference key="1">
    <citation type="journal article" date="2002" name="J. Virol.">
        <title>Characterization of the 1918 'Spanish' influenza virus matrix gene segment.</title>
        <authorList>
            <person name="Reid A.H."/>
            <person name="Fanning T.G."/>
            <person name="Janczewski T.A."/>
            <person name="McCall S."/>
            <person name="Taubenberger J.K."/>
        </authorList>
    </citation>
    <scope>NUCLEOTIDE SEQUENCE [GENOMIC RNA]</scope>
</reference>
<reference key="2">
    <citation type="journal article" date="1997" name="Science">
        <title>Initial genetic characterization of the 1918 'Spanish' influenza virus.</title>
        <authorList>
            <person name="Taubenberger J.K."/>
            <person name="Reid A.H."/>
            <person name="Krafft A.E."/>
            <person name="Bijwaard K.E."/>
            <person name="Fanning T.G."/>
        </authorList>
    </citation>
    <scope>NUCLEOTIDE SEQUENCE [GENOMIC RNA] OF 38-63</scope>
    <source>
        <strain>A/South Carolina/1/18</strain>
    </source>
</reference>
<accession>Q8BAC4</accession>
<accession>O10622</accession>
<dbReference type="EMBL" id="AY130766">
    <property type="protein sequence ID" value="AAN06598.1"/>
    <property type="molecule type" value="Genomic_RNA"/>
</dbReference>
<dbReference type="EMBL" id="AH006857">
    <property type="protein sequence ID" value="AAC57067.1"/>
    <property type="molecule type" value="Genomic_RNA"/>
</dbReference>
<dbReference type="SMR" id="Q8BAC4"/>
<dbReference type="GlyCosmos" id="Q8BAC4">
    <property type="glycosylation" value="1 site, No reported glycans"/>
</dbReference>
<dbReference type="Proteomes" id="UP000008430">
    <property type="component" value="Genome"/>
</dbReference>
<dbReference type="GO" id="GO:0020002">
    <property type="term" value="C:host cell plasma membrane"/>
    <property type="evidence" value="ECO:0007669"/>
    <property type="project" value="UniProtKB-SubCell"/>
</dbReference>
<dbReference type="GO" id="GO:0016020">
    <property type="term" value="C:membrane"/>
    <property type="evidence" value="ECO:0007669"/>
    <property type="project" value="UniProtKB-UniRule"/>
</dbReference>
<dbReference type="GO" id="GO:0055036">
    <property type="term" value="C:virion membrane"/>
    <property type="evidence" value="ECO:0007669"/>
    <property type="project" value="UniProtKB-SubCell"/>
</dbReference>
<dbReference type="GO" id="GO:0005216">
    <property type="term" value="F:monoatomic ion channel activity"/>
    <property type="evidence" value="ECO:0007669"/>
    <property type="project" value="UniProtKB-UniRule"/>
</dbReference>
<dbReference type="GO" id="GO:0015078">
    <property type="term" value="F:proton transmembrane transporter activity"/>
    <property type="evidence" value="ECO:0007669"/>
    <property type="project" value="UniProtKB-UniRule"/>
</dbReference>
<dbReference type="GO" id="GO:0051259">
    <property type="term" value="P:protein complex oligomerization"/>
    <property type="evidence" value="ECO:0007669"/>
    <property type="project" value="UniProtKB-UniRule"/>
</dbReference>
<dbReference type="GO" id="GO:0044694">
    <property type="term" value="P:symbiont genome entry into host cell via pore formation in plasma membrane"/>
    <property type="evidence" value="ECO:0007669"/>
    <property type="project" value="UniProtKB-UniRule"/>
</dbReference>
<dbReference type="GO" id="GO:0140321">
    <property type="term" value="P:symbiont-mediated suppression of host autophagy"/>
    <property type="evidence" value="ECO:0007669"/>
    <property type="project" value="UniProtKB-KW"/>
</dbReference>
<dbReference type="Gene3D" id="6.10.250.1640">
    <property type="match status" value="1"/>
</dbReference>
<dbReference type="HAMAP" id="MF_04069">
    <property type="entry name" value="INFV_M2"/>
    <property type="match status" value="1"/>
</dbReference>
<dbReference type="InterPro" id="IPR002089">
    <property type="entry name" value="Flu_M2"/>
</dbReference>
<dbReference type="Pfam" id="PF00599">
    <property type="entry name" value="Flu_M2"/>
    <property type="match status" value="1"/>
</dbReference>